<comment type="function">
    <text evidence="1">Catalyzes the N-acylation of UDP-3-O-acylglucosamine using 3-hydroxyacyl-ACP as the acyl donor. Is involved in the biosynthesis of lipid A, a phosphorylated glycolipid that anchors the lipopolysaccharide to the outer membrane of the cell.</text>
</comment>
<comment type="catalytic activity">
    <reaction evidence="1">
        <text>a UDP-3-O-[(3R)-3-hydroxyacyl]-alpha-D-glucosamine + a (3R)-hydroxyacyl-[ACP] = a UDP-2-N,3-O-bis[(3R)-3-hydroxyacyl]-alpha-D-glucosamine + holo-[ACP] + H(+)</text>
        <dbReference type="Rhea" id="RHEA:53836"/>
        <dbReference type="Rhea" id="RHEA-COMP:9685"/>
        <dbReference type="Rhea" id="RHEA-COMP:9945"/>
        <dbReference type="ChEBI" id="CHEBI:15378"/>
        <dbReference type="ChEBI" id="CHEBI:64479"/>
        <dbReference type="ChEBI" id="CHEBI:78827"/>
        <dbReference type="ChEBI" id="CHEBI:137740"/>
        <dbReference type="ChEBI" id="CHEBI:137748"/>
        <dbReference type="EC" id="2.3.1.191"/>
    </reaction>
</comment>
<comment type="pathway">
    <text evidence="1">Bacterial outer membrane biogenesis; LPS lipid A biosynthesis.</text>
</comment>
<comment type="subunit">
    <text evidence="1">Homotrimer.</text>
</comment>
<comment type="similarity">
    <text evidence="1">Belongs to the transferase hexapeptide repeat family. LpxD subfamily.</text>
</comment>
<sequence length="352" mass="35625">MSDPVFFPFAGPISLGEVAALAGAALPAGLDGTLAVAGAAPLESAGPDDLAYMDNAKYAEALGRTRARACLVSPRFAARVPEGTAALVTPQPYRGFAQVLARLFPSAARPGSLFGATGVSPGSFVHPEARLEPGVVVDPGVVIGPGAEIGSGTVLAAGAVVGPGTRIGRGCAIGPGASLLHALVGNRVIVHGGARIGQDGFGFAMGAGGHLKVPQVGRVIIQDDVEIGANTTIDRGASRDTIVGEGTKIDNLVQIAHNVVIGRHCVIVAQVGISGSTTLEDYVVLGGQVGVVGHLRIGMGAQIAGSSNINKDVPPGARWGGTPAKPVREWFREMTTLKRLAARERGPEDTDG</sequence>
<feature type="chain" id="PRO_1000127687" description="UDP-3-O-acylglucosamine N-acyltransferase">
    <location>
        <begin position="1"/>
        <end position="352"/>
    </location>
</feature>
<feature type="active site" description="Proton acceptor" evidence="1">
    <location>
        <position position="257"/>
    </location>
</feature>
<reference key="1">
    <citation type="submission" date="2008-02" db="EMBL/GenBank/DDBJ databases">
        <title>Complete sequence of chromosome of Methylobacterium sp. 4-46.</title>
        <authorList>
            <consortium name="US DOE Joint Genome Institute"/>
            <person name="Copeland A."/>
            <person name="Lucas S."/>
            <person name="Lapidus A."/>
            <person name="Glavina del Rio T."/>
            <person name="Dalin E."/>
            <person name="Tice H."/>
            <person name="Bruce D."/>
            <person name="Goodwin L."/>
            <person name="Pitluck S."/>
            <person name="Chertkov O."/>
            <person name="Brettin T."/>
            <person name="Detter J.C."/>
            <person name="Han C."/>
            <person name="Kuske C.R."/>
            <person name="Schmutz J."/>
            <person name="Larimer F."/>
            <person name="Land M."/>
            <person name="Hauser L."/>
            <person name="Kyrpides N."/>
            <person name="Ivanova N."/>
            <person name="Marx C.J."/>
            <person name="Richardson P."/>
        </authorList>
    </citation>
    <scope>NUCLEOTIDE SEQUENCE [LARGE SCALE GENOMIC DNA]</scope>
    <source>
        <strain>4-46</strain>
    </source>
</reference>
<gene>
    <name evidence="1" type="primary">lpxD</name>
    <name type="ordered locus">M446_0641</name>
</gene>
<proteinExistence type="inferred from homology"/>
<dbReference type="EC" id="2.3.1.191" evidence="1"/>
<dbReference type="EMBL" id="CP000943">
    <property type="protein sequence ID" value="ACA15202.1"/>
    <property type="molecule type" value="Genomic_DNA"/>
</dbReference>
<dbReference type="RefSeq" id="WP_012330619.1">
    <property type="nucleotide sequence ID" value="NC_010511.1"/>
</dbReference>
<dbReference type="SMR" id="B0UQ03"/>
<dbReference type="STRING" id="426117.M446_0641"/>
<dbReference type="KEGG" id="met:M446_0641"/>
<dbReference type="eggNOG" id="COG1044">
    <property type="taxonomic scope" value="Bacteria"/>
</dbReference>
<dbReference type="HOGENOM" id="CLU_049865_0_2_5"/>
<dbReference type="UniPathway" id="UPA00973"/>
<dbReference type="GO" id="GO:0016020">
    <property type="term" value="C:membrane"/>
    <property type="evidence" value="ECO:0007669"/>
    <property type="project" value="GOC"/>
</dbReference>
<dbReference type="GO" id="GO:0016410">
    <property type="term" value="F:N-acyltransferase activity"/>
    <property type="evidence" value="ECO:0007669"/>
    <property type="project" value="InterPro"/>
</dbReference>
<dbReference type="GO" id="GO:0009245">
    <property type="term" value="P:lipid A biosynthetic process"/>
    <property type="evidence" value="ECO:0007669"/>
    <property type="project" value="UniProtKB-UniRule"/>
</dbReference>
<dbReference type="CDD" id="cd03352">
    <property type="entry name" value="LbH_LpxD"/>
    <property type="match status" value="1"/>
</dbReference>
<dbReference type="Gene3D" id="2.160.10.10">
    <property type="entry name" value="Hexapeptide repeat proteins"/>
    <property type="match status" value="1"/>
</dbReference>
<dbReference type="Gene3D" id="3.40.1390.10">
    <property type="entry name" value="MurE/MurF, N-terminal domain"/>
    <property type="match status" value="1"/>
</dbReference>
<dbReference type="HAMAP" id="MF_00523">
    <property type="entry name" value="LpxD"/>
    <property type="match status" value="1"/>
</dbReference>
<dbReference type="InterPro" id="IPR001451">
    <property type="entry name" value="Hexapep"/>
</dbReference>
<dbReference type="InterPro" id="IPR018357">
    <property type="entry name" value="Hexapep_transf_CS"/>
</dbReference>
<dbReference type="InterPro" id="IPR007691">
    <property type="entry name" value="LpxD"/>
</dbReference>
<dbReference type="InterPro" id="IPR011004">
    <property type="entry name" value="Trimer_LpxA-like_sf"/>
</dbReference>
<dbReference type="InterPro" id="IPR020573">
    <property type="entry name" value="UDP_GlcNAc_AcTrfase_non-rep"/>
</dbReference>
<dbReference type="NCBIfam" id="TIGR01853">
    <property type="entry name" value="lipid_A_lpxD"/>
    <property type="match status" value="1"/>
</dbReference>
<dbReference type="NCBIfam" id="NF002060">
    <property type="entry name" value="PRK00892.1"/>
    <property type="match status" value="1"/>
</dbReference>
<dbReference type="PANTHER" id="PTHR43378">
    <property type="entry name" value="UDP-3-O-ACYLGLUCOSAMINE N-ACYLTRANSFERASE"/>
    <property type="match status" value="1"/>
</dbReference>
<dbReference type="PANTHER" id="PTHR43378:SF2">
    <property type="entry name" value="UDP-3-O-ACYLGLUCOSAMINE N-ACYLTRANSFERASE 1, MITOCHONDRIAL-RELATED"/>
    <property type="match status" value="1"/>
</dbReference>
<dbReference type="Pfam" id="PF00132">
    <property type="entry name" value="Hexapep"/>
    <property type="match status" value="2"/>
</dbReference>
<dbReference type="Pfam" id="PF04613">
    <property type="entry name" value="LpxD"/>
    <property type="match status" value="1"/>
</dbReference>
<dbReference type="SUPFAM" id="SSF51161">
    <property type="entry name" value="Trimeric LpxA-like enzymes"/>
    <property type="match status" value="1"/>
</dbReference>
<dbReference type="PROSITE" id="PS00101">
    <property type="entry name" value="HEXAPEP_TRANSFERASES"/>
    <property type="match status" value="1"/>
</dbReference>
<protein>
    <recommendedName>
        <fullName evidence="1">UDP-3-O-acylglucosamine N-acyltransferase</fullName>
        <ecNumber evidence="1">2.3.1.191</ecNumber>
    </recommendedName>
</protein>
<organism>
    <name type="scientific">Methylobacterium sp. (strain 4-46)</name>
    <dbReference type="NCBI Taxonomy" id="426117"/>
    <lineage>
        <taxon>Bacteria</taxon>
        <taxon>Pseudomonadati</taxon>
        <taxon>Pseudomonadota</taxon>
        <taxon>Alphaproteobacteria</taxon>
        <taxon>Hyphomicrobiales</taxon>
        <taxon>Methylobacteriaceae</taxon>
        <taxon>Methylobacterium</taxon>
    </lineage>
</organism>
<accession>B0UQ03</accession>
<name>LPXD_METS4</name>
<keyword id="KW-0012">Acyltransferase</keyword>
<keyword id="KW-0441">Lipid A biosynthesis</keyword>
<keyword id="KW-0444">Lipid biosynthesis</keyword>
<keyword id="KW-0443">Lipid metabolism</keyword>
<keyword id="KW-0677">Repeat</keyword>
<keyword id="KW-0808">Transferase</keyword>
<evidence type="ECO:0000255" key="1">
    <source>
        <dbReference type="HAMAP-Rule" id="MF_00523"/>
    </source>
</evidence>